<reference key="1">
    <citation type="journal article" date="2001" name="J. Biol. Chem.">
        <title>Deoxysugar methylation during biosynthesis of the antitumor polyketide elloramycin by Streptomyces olivaceus. Characterization of three methyltransferase genes.</title>
        <authorList>
            <person name="Patallo E.P."/>
            <person name="Blanco G."/>
            <person name="Fischer C."/>
            <person name="Brana A.F."/>
            <person name="Rohr J."/>
            <person name="Mendez C."/>
            <person name="Salas J.A."/>
        </authorList>
    </citation>
    <scope>NUCLEOTIDE SEQUENCE [GENOMIC DNA]</scope>
    <scope>FUNCTION</scope>
    <scope>CATALYTIC ACTIVITY</scope>
    <source>
        <strain>Tu 2353</strain>
    </source>
</reference>
<reference key="2">
    <citation type="journal article" date="2008" name="Microbiology">
        <title>Biosynthesis of elloramycin in Streptomyces olivaceus requires glycosylation by enzymes encoded outside the aglycon cluster.</title>
        <authorList>
            <person name="Ramos A."/>
            <person name="Lombo F."/>
            <person name="Brana A.F."/>
            <person name="Rohr J."/>
            <person name="Mendez C."/>
            <person name="Salas J.A."/>
        </authorList>
    </citation>
    <scope>NUCLEOTIDE SEQUENCE [GENOMIC DNA]</scope>
    <source>
        <strain>Tu 2353</strain>
    </source>
</reference>
<organism>
    <name type="scientific">Streptomyces olivaceus</name>
    <dbReference type="NCBI Taxonomy" id="47716"/>
    <lineage>
        <taxon>Bacteria</taxon>
        <taxon>Bacillati</taxon>
        <taxon>Actinomycetota</taxon>
        <taxon>Actinomycetes</taxon>
        <taxon>Kitasatosporales</taxon>
        <taxon>Streptomycetaceae</taxon>
        <taxon>Streptomyces</taxon>
    </lineage>
</organism>
<sequence>MTTPSPTPPLAAAEVAAAAGLQQRDLLAVLDRVGLEPAVAFLVHDLTARCDTPDNPDAARIGLAVEHSGHRTERVLAVRKGEPVRVDEETAGPPPVRLTFDLADLVRGVYGPPPGPGAGLFRVERDDAWFVKNADDAEPFRIFESYMRAVDVLVRAATSRPGDLGRLAARHASDKWGLWHWFTPLYEHHFARLRHQPVRVLELGIGGYQNPDEGGGSLKMWRSYFPQGRIFGVDYFPKHGLDEDRIHTLQGSQDDAGFLRRVAEEHGPFDIVIDDGSHVAGHQQTAFRTLFPAVRNGGFYVIEDLWTAYCPGYGGAATARAEGRTSIGLLKSLLDDLHYEEWTAPEPAAPGFAAPSLVGVHVYRNLAVLEKGRNSEGTIPFFAPREIDYV</sequence>
<dbReference type="EC" id="2.1.1.306" evidence="2"/>
<dbReference type="EMBL" id="AJ300305">
    <property type="protein sequence ID" value="CAD57140.1"/>
    <property type="molecule type" value="Genomic_DNA"/>
</dbReference>
<dbReference type="EMBL" id="AM900040">
    <property type="protein sequence ID" value="CAP12608.1"/>
    <property type="molecule type" value="Genomic_DNA"/>
</dbReference>
<dbReference type="SMR" id="Q9AJU1"/>
<dbReference type="KEGG" id="ag:CAP12608"/>
<dbReference type="BioCyc" id="MetaCyc:MONOMER-18590"/>
<dbReference type="BRENDA" id="2.1.1.306">
    <property type="organism ID" value="6068"/>
</dbReference>
<dbReference type="GO" id="GO:0046872">
    <property type="term" value="F:metal ion binding"/>
    <property type="evidence" value="ECO:0007669"/>
    <property type="project" value="UniProtKB-KW"/>
</dbReference>
<dbReference type="GO" id="GO:0008168">
    <property type="term" value="F:methyltransferase activity"/>
    <property type="evidence" value="ECO:0000314"/>
    <property type="project" value="UniProtKB"/>
</dbReference>
<dbReference type="GO" id="GO:0017000">
    <property type="term" value="P:antibiotic biosynthetic process"/>
    <property type="evidence" value="ECO:0000314"/>
    <property type="project" value="UniProtKB"/>
</dbReference>
<dbReference type="GO" id="GO:0032259">
    <property type="term" value="P:methylation"/>
    <property type="evidence" value="ECO:0000314"/>
    <property type="project" value="UniProtKB"/>
</dbReference>
<dbReference type="FunFam" id="3.40.50.150:FF:000651">
    <property type="entry name" value="Mycinamicin VI 2''-O-methyltransferase"/>
    <property type="match status" value="1"/>
</dbReference>
<dbReference type="Gene3D" id="3.30.1050.30">
    <property type="match status" value="1"/>
</dbReference>
<dbReference type="Gene3D" id="3.40.50.150">
    <property type="entry name" value="Vaccinia Virus protein VP39"/>
    <property type="match status" value="1"/>
</dbReference>
<dbReference type="InterPro" id="IPR040800">
    <property type="entry name" value="MycE_N"/>
</dbReference>
<dbReference type="InterPro" id="IPR029063">
    <property type="entry name" value="SAM-dependent_MTases_sf"/>
</dbReference>
<dbReference type="Pfam" id="PF17843">
    <property type="entry name" value="MycE_N"/>
    <property type="match status" value="1"/>
</dbReference>
<dbReference type="SUPFAM" id="SSF53335">
    <property type="entry name" value="S-adenosyl-L-methionine-dependent methyltransferases"/>
    <property type="match status" value="1"/>
</dbReference>
<accession>Q9AJU1</accession>
<feature type="chain" id="PRO_0000430714" description="8-demethyl-8-(2-methoxy-alpha-L-rhamnosyl)-tetracenomycin-C 3'-O-methyltransferase">
    <location>
        <begin position="1"/>
        <end position="390"/>
    </location>
</feature>
<feature type="active site" description="Proton acceptor" evidence="1">
    <location>
        <position position="278"/>
    </location>
</feature>
<feature type="binding site" evidence="1">
    <location>
        <begin position="202"/>
        <end position="208"/>
    </location>
    <ligand>
        <name>S-adenosyl-L-methionine</name>
        <dbReference type="ChEBI" id="CHEBI:59789"/>
    </ligand>
</feature>
<feature type="binding site" evidence="1">
    <location>
        <position position="217"/>
    </location>
    <ligand>
        <name>S-adenosyl-L-methionine</name>
        <dbReference type="ChEBI" id="CHEBI:59789"/>
    </ligand>
</feature>
<feature type="binding site" evidence="1">
    <location>
        <position position="234"/>
    </location>
    <ligand>
        <name>S-adenosyl-L-methionine</name>
        <dbReference type="ChEBI" id="CHEBI:59789"/>
    </ligand>
</feature>
<feature type="binding site" evidence="1">
    <location>
        <begin position="252"/>
        <end position="253"/>
    </location>
    <ligand>
        <name>S-adenosyl-L-methionine</name>
        <dbReference type="ChEBI" id="CHEBI:59789"/>
    </ligand>
</feature>
<feature type="binding site" evidence="1">
    <location>
        <position position="275"/>
    </location>
    <ligand>
        <name>Mg(2+)</name>
        <dbReference type="ChEBI" id="CHEBI:18420"/>
    </ligand>
</feature>
<feature type="binding site" evidence="1">
    <location>
        <position position="275"/>
    </location>
    <ligand>
        <name>S-adenosyl-L-methionine</name>
        <dbReference type="ChEBI" id="CHEBI:59789"/>
    </ligand>
</feature>
<feature type="binding site" evidence="1">
    <location>
        <position position="303"/>
    </location>
    <ligand>
        <name>Mg(2+)</name>
        <dbReference type="ChEBI" id="CHEBI:18420"/>
    </ligand>
</feature>
<feature type="binding site" evidence="1">
    <location>
        <position position="304"/>
    </location>
    <ligand>
        <name>Mg(2+)</name>
        <dbReference type="ChEBI" id="CHEBI:18420"/>
    </ligand>
</feature>
<gene>
    <name evidence="3" type="primary">elmMII</name>
</gene>
<protein>
    <recommendedName>
        <fullName evidence="4">8-demethyl-8-(2-methoxy-alpha-L-rhamnosyl)-tetracenomycin-C 3'-O-methyltransferase</fullName>
        <ecNumber evidence="2">2.1.1.306</ecNumber>
    </recommendedName>
    <alternativeName>
        <fullName evidence="3">O-methyltransferase II</fullName>
    </alternativeName>
</protein>
<comment type="function">
    <text evidence="2">O-methyltransferase involved in the biosynthesis of the permethylated L-rhamnose moiety of elloramycin, an antitumor polyketide. Mediates the methylation of the hydroxy groups at the 3'-position after the sugar moiety has been attached to the aglycon.</text>
</comment>
<comment type="catalytic activity">
    <reaction evidence="2">
        <text>8-demethyl-8-(2-O-methyl-alpha-L-rhamnosyl)-tetracenomycin C + S-adenosyl-L-methionine = 8-demethyl-8-(2,3-di-O-methyl-alpha-L-rhamnosyl)-tetracenomycin C + S-adenosyl-L-homocysteine + H(+)</text>
        <dbReference type="Rhea" id="RHEA:41544"/>
        <dbReference type="ChEBI" id="CHEBI:15378"/>
        <dbReference type="ChEBI" id="CHEBI:57856"/>
        <dbReference type="ChEBI" id="CHEBI:59789"/>
        <dbReference type="ChEBI" id="CHEBI:78285"/>
        <dbReference type="ChEBI" id="CHEBI:78286"/>
        <dbReference type="EC" id="2.1.1.306"/>
    </reaction>
</comment>
<comment type="cofactor">
    <cofactor evidence="1">
        <name>Mg(2+)</name>
        <dbReference type="ChEBI" id="CHEBI:18420"/>
    </cofactor>
</comment>
<comment type="pathway">
    <text evidence="4">Antibiotic biosynthesis.</text>
</comment>
<comment type="similarity">
    <text evidence="4">Belongs to the methyltransferase OleY/MycE family.</text>
</comment>
<evidence type="ECO:0000250" key="1">
    <source>
        <dbReference type="UniProtKB" id="Q83WF2"/>
    </source>
</evidence>
<evidence type="ECO:0000269" key="2">
    <source>
    </source>
</evidence>
<evidence type="ECO:0000303" key="3">
    <source>
    </source>
</evidence>
<evidence type="ECO:0000305" key="4"/>
<name>ELMM2_STROV</name>
<keyword id="KW-0045">Antibiotic biosynthesis</keyword>
<keyword id="KW-0460">Magnesium</keyword>
<keyword id="KW-0479">Metal-binding</keyword>
<keyword id="KW-0489">Methyltransferase</keyword>
<keyword id="KW-0949">S-adenosyl-L-methionine</keyword>
<keyword id="KW-0808">Transferase</keyword>
<proteinExistence type="evidence at protein level"/>